<reference key="1">
    <citation type="submission" date="2006-11" db="EMBL/GenBank/DDBJ databases">
        <title>Identification and characterization of a new conjugation/ type IVA secretion system (trb/tra) of L. pneumophila Corby localized on a mobile genomic island.</title>
        <authorList>
            <person name="Gloeckner G."/>
            <person name="Albert-Weissenberger C."/>
            <person name="Weinmann E."/>
            <person name="Jacobi S."/>
            <person name="Schunder E."/>
            <person name="Steinert M."/>
            <person name="Buchrieser C."/>
            <person name="Hacker J."/>
            <person name="Heuner K."/>
        </authorList>
    </citation>
    <scope>NUCLEOTIDE SEQUENCE [LARGE SCALE GENOMIC DNA]</scope>
    <source>
        <strain>Corby</strain>
    </source>
</reference>
<sequence length="224" mass="25136">MKINLERLCRRLNYHFNNIAYLKQALTHCSAGSDNYERFEFLGDSILSFVIANELFNRFPLHSEGQLSRLRSFLVKGEMLAEIAREIGLGDYLFLGQGELRSGGFRRTSILADALEAILAAIYLDGGMTAAKQIILMLYSSRLDDPDLNHCLKDAKTQLQEFLQASKFALPEYVLTKIEGDEHAQIFHVTCTIEGVSQVAYGTGPNRRKAEQLAAKAMLEQLQG</sequence>
<gene>
    <name evidence="1" type="primary">rnc</name>
    <name type="ordered locus">LPC_1314</name>
</gene>
<organism>
    <name type="scientific">Legionella pneumophila (strain Corby)</name>
    <dbReference type="NCBI Taxonomy" id="400673"/>
    <lineage>
        <taxon>Bacteria</taxon>
        <taxon>Pseudomonadati</taxon>
        <taxon>Pseudomonadota</taxon>
        <taxon>Gammaproteobacteria</taxon>
        <taxon>Legionellales</taxon>
        <taxon>Legionellaceae</taxon>
        <taxon>Legionella</taxon>
    </lineage>
</organism>
<proteinExistence type="inferred from homology"/>
<evidence type="ECO:0000255" key="1">
    <source>
        <dbReference type="HAMAP-Rule" id="MF_00104"/>
    </source>
</evidence>
<name>RNC_LEGPC</name>
<protein>
    <recommendedName>
        <fullName evidence="1">Ribonuclease 3</fullName>
        <ecNumber evidence="1">3.1.26.3</ecNumber>
    </recommendedName>
    <alternativeName>
        <fullName evidence="1">Ribonuclease III</fullName>
        <shortName evidence="1">RNase III</shortName>
    </alternativeName>
</protein>
<comment type="function">
    <text evidence="1">Digests double-stranded RNA. Involved in the processing of primary rRNA transcript to yield the immediate precursors to the large and small rRNAs (23S and 16S). Processes some mRNAs, and tRNAs when they are encoded in the rRNA operon. Processes pre-crRNA and tracrRNA of type II CRISPR loci if present in the organism.</text>
</comment>
<comment type="catalytic activity">
    <reaction evidence="1">
        <text>Endonucleolytic cleavage to 5'-phosphomonoester.</text>
        <dbReference type="EC" id="3.1.26.3"/>
    </reaction>
</comment>
<comment type="cofactor">
    <cofactor evidence="1">
        <name>Mg(2+)</name>
        <dbReference type="ChEBI" id="CHEBI:18420"/>
    </cofactor>
</comment>
<comment type="subunit">
    <text evidence="1">Homodimer.</text>
</comment>
<comment type="subcellular location">
    <subcellularLocation>
        <location evidence="1">Cytoplasm</location>
    </subcellularLocation>
</comment>
<comment type="similarity">
    <text evidence="1">Belongs to the ribonuclease III family.</text>
</comment>
<keyword id="KW-0963">Cytoplasm</keyword>
<keyword id="KW-0255">Endonuclease</keyword>
<keyword id="KW-0378">Hydrolase</keyword>
<keyword id="KW-0460">Magnesium</keyword>
<keyword id="KW-0479">Metal-binding</keyword>
<keyword id="KW-0507">mRNA processing</keyword>
<keyword id="KW-0540">Nuclease</keyword>
<keyword id="KW-0694">RNA-binding</keyword>
<keyword id="KW-0698">rRNA processing</keyword>
<keyword id="KW-0699">rRNA-binding</keyword>
<keyword id="KW-0819">tRNA processing</keyword>
<accession>A5ID21</accession>
<feature type="chain" id="PRO_1000075772" description="Ribonuclease 3">
    <location>
        <begin position="1"/>
        <end position="224"/>
    </location>
</feature>
<feature type="domain" description="RNase III" evidence="1">
    <location>
        <begin position="5"/>
        <end position="127"/>
    </location>
</feature>
<feature type="domain" description="DRBM" evidence="1">
    <location>
        <begin position="154"/>
        <end position="224"/>
    </location>
</feature>
<feature type="active site" evidence="1">
    <location>
        <position position="44"/>
    </location>
</feature>
<feature type="active site" evidence="1">
    <location>
        <position position="116"/>
    </location>
</feature>
<feature type="binding site" evidence="1">
    <location>
        <position position="40"/>
    </location>
    <ligand>
        <name>Mg(2+)</name>
        <dbReference type="ChEBI" id="CHEBI:18420"/>
    </ligand>
</feature>
<feature type="binding site" evidence="1">
    <location>
        <position position="113"/>
    </location>
    <ligand>
        <name>Mg(2+)</name>
        <dbReference type="ChEBI" id="CHEBI:18420"/>
    </ligand>
</feature>
<feature type="binding site" evidence="1">
    <location>
        <position position="116"/>
    </location>
    <ligand>
        <name>Mg(2+)</name>
        <dbReference type="ChEBI" id="CHEBI:18420"/>
    </ligand>
</feature>
<dbReference type="EC" id="3.1.26.3" evidence="1"/>
<dbReference type="EMBL" id="CP000675">
    <property type="protein sequence ID" value="ABQ55271.1"/>
    <property type="molecule type" value="Genomic_DNA"/>
</dbReference>
<dbReference type="RefSeq" id="WP_011214117.1">
    <property type="nucleotide sequence ID" value="NZ_JAPMSS010000005.1"/>
</dbReference>
<dbReference type="SMR" id="A5ID21"/>
<dbReference type="KEGG" id="lpc:LPC_1314"/>
<dbReference type="HOGENOM" id="CLU_000907_1_1_6"/>
<dbReference type="GO" id="GO:0005737">
    <property type="term" value="C:cytoplasm"/>
    <property type="evidence" value="ECO:0007669"/>
    <property type="project" value="UniProtKB-SubCell"/>
</dbReference>
<dbReference type="GO" id="GO:0003725">
    <property type="term" value="F:double-stranded RNA binding"/>
    <property type="evidence" value="ECO:0007669"/>
    <property type="project" value="TreeGrafter"/>
</dbReference>
<dbReference type="GO" id="GO:0046872">
    <property type="term" value="F:metal ion binding"/>
    <property type="evidence" value="ECO:0007669"/>
    <property type="project" value="UniProtKB-KW"/>
</dbReference>
<dbReference type="GO" id="GO:0004525">
    <property type="term" value="F:ribonuclease III activity"/>
    <property type="evidence" value="ECO:0007669"/>
    <property type="project" value="UniProtKB-UniRule"/>
</dbReference>
<dbReference type="GO" id="GO:0019843">
    <property type="term" value="F:rRNA binding"/>
    <property type="evidence" value="ECO:0007669"/>
    <property type="project" value="UniProtKB-KW"/>
</dbReference>
<dbReference type="GO" id="GO:0006397">
    <property type="term" value="P:mRNA processing"/>
    <property type="evidence" value="ECO:0007669"/>
    <property type="project" value="UniProtKB-UniRule"/>
</dbReference>
<dbReference type="GO" id="GO:0010468">
    <property type="term" value="P:regulation of gene expression"/>
    <property type="evidence" value="ECO:0007669"/>
    <property type="project" value="TreeGrafter"/>
</dbReference>
<dbReference type="GO" id="GO:0006364">
    <property type="term" value="P:rRNA processing"/>
    <property type="evidence" value="ECO:0007669"/>
    <property type="project" value="UniProtKB-UniRule"/>
</dbReference>
<dbReference type="GO" id="GO:0008033">
    <property type="term" value="P:tRNA processing"/>
    <property type="evidence" value="ECO:0007669"/>
    <property type="project" value="UniProtKB-KW"/>
</dbReference>
<dbReference type="CDD" id="cd10845">
    <property type="entry name" value="DSRM_RNAse_III_family"/>
    <property type="match status" value="1"/>
</dbReference>
<dbReference type="CDD" id="cd00593">
    <property type="entry name" value="RIBOc"/>
    <property type="match status" value="1"/>
</dbReference>
<dbReference type="FunFam" id="1.10.1520.10:FF:000001">
    <property type="entry name" value="Ribonuclease 3"/>
    <property type="match status" value="1"/>
</dbReference>
<dbReference type="FunFam" id="3.30.160.20:FF:000003">
    <property type="entry name" value="Ribonuclease 3"/>
    <property type="match status" value="1"/>
</dbReference>
<dbReference type="Gene3D" id="3.30.160.20">
    <property type="match status" value="1"/>
</dbReference>
<dbReference type="Gene3D" id="1.10.1520.10">
    <property type="entry name" value="Ribonuclease III domain"/>
    <property type="match status" value="1"/>
</dbReference>
<dbReference type="HAMAP" id="MF_00104">
    <property type="entry name" value="RNase_III"/>
    <property type="match status" value="1"/>
</dbReference>
<dbReference type="InterPro" id="IPR014720">
    <property type="entry name" value="dsRBD_dom"/>
</dbReference>
<dbReference type="InterPro" id="IPR011907">
    <property type="entry name" value="RNase_III"/>
</dbReference>
<dbReference type="InterPro" id="IPR000999">
    <property type="entry name" value="RNase_III_dom"/>
</dbReference>
<dbReference type="InterPro" id="IPR036389">
    <property type="entry name" value="RNase_III_sf"/>
</dbReference>
<dbReference type="NCBIfam" id="TIGR02191">
    <property type="entry name" value="RNaseIII"/>
    <property type="match status" value="1"/>
</dbReference>
<dbReference type="PANTHER" id="PTHR11207:SF0">
    <property type="entry name" value="RIBONUCLEASE 3"/>
    <property type="match status" value="1"/>
</dbReference>
<dbReference type="PANTHER" id="PTHR11207">
    <property type="entry name" value="RIBONUCLEASE III"/>
    <property type="match status" value="1"/>
</dbReference>
<dbReference type="Pfam" id="PF00035">
    <property type="entry name" value="dsrm"/>
    <property type="match status" value="1"/>
</dbReference>
<dbReference type="Pfam" id="PF14622">
    <property type="entry name" value="Ribonucleas_3_3"/>
    <property type="match status" value="1"/>
</dbReference>
<dbReference type="SMART" id="SM00358">
    <property type="entry name" value="DSRM"/>
    <property type="match status" value="1"/>
</dbReference>
<dbReference type="SMART" id="SM00535">
    <property type="entry name" value="RIBOc"/>
    <property type="match status" value="1"/>
</dbReference>
<dbReference type="SUPFAM" id="SSF54768">
    <property type="entry name" value="dsRNA-binding domain-like"/>
    <property type="match status" value="1"/>
</dbReference>
<dbReference type="SUPFAM" id="SSF69065">
    <property type="entry name" value="RNase III domain-like"/>
    <property type="match status" value="1"/>
</dbReference>
<dbReference type="PROSITE" id="PS50137">
    <property type="entry name" value="DS_RBD"/>
    <property type="match status" value="1"/>
</dbReference>
<dbReference type="PROSITE" id="PS00517">
    <property type="entry name" value="RNASE_3_1"/>
    <property type="match status" value="1"/>
</dbReference>
<dbReference type="PROSITE" id="PS50142">
    <property type="entry name" value="RNASE_3_2"/>
    <property type="match status" value="1"/>
</dbReference>